<gene>
    <name type="primary">DYAD</name>
    <name type="synonym">SWI1</name>
    <name type="ordered locus">At5g51330</name>
    <name type="ORF">MFG13.3</name>
</gene>
<accession>Q9FGN8</accession>
<accession>Q946Y3</accession>
<proteinExistence type="evidence at protein level"/>
<keyword id="KW-0025">Alternative splicing</keyword>
<keyword id="KW-0217">Developmental protein</keyword>
<keyword id="KW-0469">Meiosis</keyword>
<keyword id="KW-0539">Nucleus</keyword>
<keyword id="KW-1185">Reference proteome</keyword>
<name>DYAD_ARATH</name>
<organism>
    <name type="scientific">Arabidopsis thaliana</name>
    <name type="common">Mouse-ear cress</name>
    <dbReference type="NCBI Taxonomy" id="3702"/>
    <lineage>
        <taxon>Eukaryota</taxon>
        <taxon>Viridiplantae</taxon>
        <taxon>Streptophyta</taxon>
        <taxon>Embryophyta</taxon>
        <taxon>Tracheophyta</taxon>
        <taxon>Spermatophyta</taxon>
        <taxon>Magnoliopsida</taxon>
        <taxon>eudicotyledons</taxon>
        <taxon>Gunneridae</taxon>
        <taxon>Pentapetalae</taxon>
        <taxon>rosids</taxon>
        <taxon>malvids</taxon>
        <taxon>Brassicales</taxon>
        <taxon>Brassicaceae</taxon>
        <taxon>Camelineae</taxon>
        <taxon>Arabidopsis</taxon>
    </lineage>
</organism>
<protein>
    <recommendedName>
        <fullName>Protein DYAD</fullName>
    </recommendedName>
    <alternativeName>
        <fullName>Protein SWITCH 1</fullName>
    </alternativeName>
</protein>
<reference key="1">
    <citation type="journal article" date="2002" name="Development">
        <title>Identification and analysis of DYAD: a gene required for meiotic chromosome organisation and female meiotic progression in Arabidopsis.</title>
        <authorList>
            <person name="Agashe B."/>
            <person name="Prasad C.K."/>
            <person name="Siddiqi I."/>
        </authorList>
    </citation>
    <scope>NUCLEOTIDE SEQUENCE [MRNA] (ISOFORM L)</scope>
    <scope>FUNCTION</scope>
    <scope>TISSUE SPECIFICITY</scope>
    <scope>SUBCELLULAR LOCATION</scope>
</reference>
<reference key="2">
    <citation type="submission" date="1999-04" db="EMBL/GenBank/DDBJ databases">
        <title>Structural analysis of Arabidopsis thaliana chromosome 5. XI.</title>
        <authorList>
            <person name="Kaneko T."/>
            <person name="Katoh T."/>
            <person name="Asamizu E."/>
            <person name="Sato S."/>
            <person name="Nakamura Y."/>
            <person name="Kotani H."/>
            <person name="Tabata S."/>
        </authorList>
    </citation>
    <scope>NUCLEOTIDE SEQUENCE [LARGE SCALE GENOMIC DNA]</scope>
    <source>
        <strain>cv. Columbia</strain>
    </source>
</reference>
<reference key="3">
    <citation type="journal article" date="2017" name="Plant J.">
        <title>Araport11: a complete reannotation of the Arabidopsis thaliana reference genome.</title>
        <authorList>
            <person name="Cheng C.Y."/>
            <person name="Krishnakumar V."/>
            <person name="Chan A.P."/>
            <person name="Thibaud-Nissen F."/>
            <person name="Schobel S."/>
            <person name="Town C.D."/>
        </authorList>
    </citation>
    <scope>GENOME REANNOTATION</scope>
    <source>
        <strain>cv. Columbia</strain>
    </source>
</reference>
<reference key="4">
    <citation type="journal article" date="2001" name="Genes Dev.">
        <title>SWITCH1 (SWI1): a novel protein required for the establishment of sister chromatid cohesion and for bivalent formation at meiosis.</title>
        <authorList>
            <person name="Mercier R."/>
            <person name="Vezon D."/>
            <person name="Bullier E."/>
            <person name="Motamayor J.C."/>
            <person name="Sellier A."/>
            <person name="Lefevre F."/>
            <person name="Pelletier G."/>
            <person name="Horlow C."/>
        </authorList>
    </citation>
    <scope>NUCLEOTIDE SEQUENCE [MRNA] OF 4-639 (ISOFORMS L AND S)</scope>
    <scope>FUNCTION</scope>
    <scope>TISSUE SPECIFICITY</scope>
    <scope>SUBCELLULAR LOCATION</scope>
    <scope>DISRUPTION PHENOTYPE</scope>
</reference>
<reference key="5">
    <citation type="journal article" date="2000" name="Development">
        <title>The dyad gene is required for progression through female meiosis in Arabidopsis.</title>
        <authorList>
            <person name="Siddiqi I."/>
            <person name="Ganesh G."/>
            <person name="Grossniklaus U."/>
            <person name="Subbiah V."/>
        </authorList>
    </citation>
    <scope>FUNCTION</scope>
</reference>
<reference key="6">
    <citation type="journal article" date="2000" name="Sex. Plant Reprod.">
        <title>Switch (swi1), an Arabidopsis thaliana mutant affected in the female meiotic switch.</title>
        <authorList>
            <person name="Motamayor J.C."/>
            <person name="Vezon D."/>
            <person name="Bajon C."/>
            <person name="Sauvanet A."/>
            <person name="Grandjean O."/>
            <person name="Marchand M."/>
            <person name="Bechtold N."/>
            <person name="Pelletier G."/>
            <person name="Horlow C."/>
        </authorList>
        <dbReference type="AGRICOLA" id="IND22037359"/>
    </citation>
    <scope>FUNCTION</scope>
</reference>
<reference key="7">
    <citation type="journal article" date="2003" name="Development">
        <title>The meiotic protein SWI1 is required for axial element formation and recombination initiation in Arabidopsis.</title>
        <authorList>
            <person name="Mercier R."/>
            <person name="Armstrong S.J."/>
            <person name="Horlow C."/>
            <person name="Jackson N.P."/>
            <person name="Makaroff C.A."/>
            <person name="Vezon D."/>
            <person name="Pelletier G."/>
            <person name="Jones G.H."/>
            <person name="Franklin F.C.H."/>
        </authorList>
    </citation>
    <scope>FUNCTION</scope>
    <scope>TISSUE SPECIFICITY</scope>
    <scope>SUBCELLULAR LOCATION</scope>
</reference>
<reference key="8">
    <citation type="journal article" date="2008" name="Nature">
        <title>Gamete formation without meiosis in Arabidopsis.</title>
        <authorList>
            <person name="Ravi M."/>
            <person name="Marimuthu M.P.A."/>
            <person name="Siddiqi I."/>
        </authorList>
    </citation>
    <scope>FUNCTION</scope>
</reference>
<evidence type="ECO:0000255" key="1">
    <source>
        <dbReference type="PROSITE-ProRule" id="PRU00270"/>
    </source>
</evidence>
<evidence type="ECO:0000256" key="2">
    <source>
        <dbReference type="SAM" id="MobiDB-lite"/>
    </source>
</evidence>
<evidence type="ECO:0000269" key="3">
    <source>
    </source>
</evidence>
<evidence type="ECO:0000269" key="4">
    <source>
    </source>
</evidence>
<evidence type="ECO:0000269" key="5">
    <source>
    </source>
</evidence>
<evidence type="ECO:0000269" key="6">
    <source>
    </source>
</evidence>
<evidence type="ECO:0000269" key="7">
    <source>
    </source>
</evidence>
<evidence type="ECO:0000269" key="8">
    <source ref="6"/>
</evidence>
<evidence type="ECO:0000303" key="9">
    <source>
    </source>
</evidence>
<evidence type="ECO:0000305" key="10"/>
<comment type="function">
    <text evidence="3 4 5 6 7 8">Required for fertility. Involved in chromatid cohesion establishment, in chromosome structure during male and female meiosis (e.g. the synapse formation between homologous chromosomes, the recombination, and the cohesion of both chromatid arm and centromere), and in axial element formation. Regulates the switch from mitosis to the reductional meiosis division of megaspores prior to the female gametogenesis (megasporogenesis).</text>
</comment>
<comment type="subcellular location">
    <subcellularLocation>
        <location evidence="4 5 6">Nucleus</location>
    </subcellularLocation>
    <text>Localized in meiocyte nuclei just before meiosis, exclusively in meiotic G1 and S phase (at protein level).</text>
</comment>
<comment type="alternative products">
    <event type="alternative splicing"/>
    <isoform>
        <id>Q9FGN8-1</id>
        <name>L</name>
        <sequence type="displayed"/>
    </isoform>
    <isoform>
        <id>Q9FGN8-2</id>
        <name>S</name>
        <sequence type="described" ref="VSP_033111 VSP_033112"/>
    </isoform>
</comment>
<comment type="tissue specificity">
    <text evidence="4 5 6">Meiocytes (at protein level).</text>
</comment>
<comment type="disruption phenotype">
    <text evidence="4">Plants contain 2 cells with prominent nuclei in the central region of the ovule where the embryo sac is normally located. Sometimes, an unreduced diploid female gamete, arising from apomeiosis, can be fertilized by a haploid male gamete, leading to a viable triploid embryo.</text>
</comment>
<comment type="sequence caution" evidence="10">
    <conflict type="frameshift">
        <sequence resource="EMBL-CDS" id="AAL13233"/>
    </conflict>
</comment>
<comment type="sequence caution" evidence="10">
    <conflict type="erroneous gene model prediction">
        <sequence resource="EMBL-CDS" id="BAB09744"/>
    </conflict>
</comment>
<feature type="chain" id="PRO_0000330766" description="Protein DYAD">
    <location>
        <begin position="1"/>
        <end position="639"/>
    </location>
</feature>
<feature type="domain" description="PI-PLC X-box" evidence="1">
    <location>
        <begin position="351"/>
        <end position="498"/>
    </location>
</feature>
<feature type="region of interest" description="Disordered" evidence="2">
    <location>
        <begin position="201"/>
        <end position="256"/>
    </location>
</feature>
<feature type="region of interest" description="Disordered" evidence="2">
    <location>
        <begin position="536"/>
        <end position="561"/>
    </location>
</feature>
<feature type="compositionally biased region" description="Basic and acidic residues" evidence="2">
    <location>
        <begin position="201"/>
        <end position="226"/>
    </location>
</feature>
<feature type="compositionally biased region" description="Acidic residues" evidence="2">
    <location>
        <begin position="227"/>
        <end position="237"/>
    </location>
</feature>
<feature type="compositionally biased region" description="Basic and acidic residues" evidence="2">
    <location>
        <begin position="546"/>
        <end position="558"/>
    </location>
</feature>
<feature type="splice variant" id="VSP_033111" description="In isoform S." evidence="9">
    <location>
        <begin position="1"/>
        <end position="61"/>
    </location>
</feature>
<feature type="splice variant" id="VSP_033112" description="In isoform S." evidence="9">
    <original>VM</original>
    <variation>MQ</variation>
    <location>
        <begin position="62"/>
        <end position="63"/>
    </location>
</feature>
<dbReference type="EMBL" id="AF466153">
    <property type="protein sequence ID" value="AAL73988.1"/>
    <property type="molecule type" value="mRNA"/>
</dbReference>
<dbReference type="EMBL" id="AB025621">
    <property type="protein sequence ID" value="BAB09744.1"/>
    <property type="status" value="ALT_SEQ"/>
    <property type="molecule type" value="Genomic_DNA"/>
</dbReference>
<dbReference type="EMBL" id="CP002688">
    <property type="protein sequence ID" value="AED96067.1"/>
    <property type="molecule type" value="Genomic_DNA"/>
</dbReference>
<dbReference type="EMBL" id="AF362001">
    <property type="protein sequence ID" value="AAL13232.1"/>
    <property type="molecule type" value="mRNA"/>
</dbReference>
<dbReference type="EMBL" id="AF362002">
    <property type="protein sequence ID" value="AAL13233.1"/>
    <property type="status" value="ALT_FRAME"/>
    <property type="molecule type" value="mRNA"/>
</dbReference>
<dbReference type="RefSeq" id="NP_001332209.1">
    <property type="nucleotide sequence ID" value="NM_001344934.1"/>
</dbReference>
<dbReference type="RefSeq" id="NP_568757.2">
    <molecule id="Q9FGN8-1"/>
    <property type="nucleotide sequence ID" value="NM_124512.3"/>
</dbReference>
<dbReference type="SMR" id="Q9FGN8"/>
<dbReference type="STRING" id="3702.Q9FGN8"/>
<dbReference type="PaxDb" id="3702-AT5G51330.1"/>
<dbReference type="EnsemblPlants" id="AT5G51330.1">
    <molecule id="Q9FGN8-1"/>
    <property type="protein sequence ID" value="AT5G51330.1"/>
    <property type="gene ID" value="AT5G51330"/>
</dbReference>
<dbReference type="GeneID" id="835207"/>
<dbReference type="Gramene" id="AT5G51330.1">
    <molecule id="Q9FGN8-1"/>
    <property type="protein sequence ID" value="AT5G51330.1"/>
    <property type="gene ID" value="AT5G51330"/>
</dbReference>
<dbReference type="KEGG" id="ath:AT5G51330"/>
<dbReference type="Araport" id="AT5G51330"/>
<dbReference type="TAIR" id="AT5G51330">
    <property type="gene designation" value="SWI1"/>
</dbReference>
<dbReference type="eggNOG" id="ENOG502S3AA">
    <property type="taxonomic scope" value="Eukaryota"/>
</dbReference>
<dbReference type="HOGENOM" id="CLU_017061_1_0_1"/>
<dbReference type="InParanoid" id="Q9FGN8"/>
<dbReference type="OMA" id="LGWKIGD"/>
<dbReference type="PRO" id="PR:Q9FGN8"/>
<dbReference type="Proteomes" id="UP000006548">
    <property type="component" value="Chromosome 5"/>
</dbReference>
<dbReference type="ExpressionAtlas" id="Q9FGN8">
    <property type="expression patterns" value="baseline and differential"/>
</dbReference>
<dbReference type="GO" id="GO:0005634">
    <property type="term" value="C:nucleus"/>
    <property type="evidence" value="ECO:0000314"/>
    <property type="project" value="TAIR"/>
</dbReference>
<dbReference type="GO" id="GO:0007066">
    <property type="term" value="P:female meiosis sister chromatid cohesion"/>
    <property type="evidence" value="ECO:0000315"/>
    <property type="project" value="TAIR"/>
</dbReference>
<dbReference type="GO" id="GO:0007065">
    <property type="term" value="P:male meiosis sister chromatid cohesion"/>
    <property type="evidence" value="ECO:0000315"/>
    <property type="project" value="TAIR"/>
</dbReference>
<dbReference type="GO" id="GO:0007131">
    <property type="term" value="P:reciprocal meiotic recombination"/>
    <property type="evidence" value="ECO:0000315"/>
    <property type="project" value="TAIR"/>
</dbReference>
<dbReference type="InterPro" id="IPR044221">
    <property type="entry name" value="DYAD/AMEIOTIC1"/>
</dbReference>
<dbReference type="PANTHER" id="PTHR46740">
    <property type="entry name" value="PROTEIN DYAD"/>
    <property type="match status" value="1"/>
</dbReference>
<dbReference type="PANTHER" id="PTHR46740:SF2">
    <property type="entry name" value="PROTEIN DYAD"/>
    <property type="match status" value="1"/>
</dbReference>
<dbReference type="PROSITE" id="PS50007">
    <property type="entry name" value="PIPLC_X_DOMAIN"/>
    <property type="match status" value="1"/>
</dbReference>
<sequence>MSSTMFVKRNPIRETTAGKISSPSSPTLNVAVAHIRAGSYYEIDASILPQRSPENLKSIRVVMVSKITASDVSLRYPSMFSLRSHFDYSRMNRNKPMKKRSGGGLLPVFDESHVMASELAGDLLYRRIAPHELSMNRNSWGFWVSSSSRRNKFPRREVVSQPAYNTRLCRAASPEGKCSSELKSGGMIKWGRRLRVQYQSRHIDTRKNKEGEESSRVKDEVYKEEEMEKEEDDDDGNEIGGTKQEAKEITNGNRKRKLIESSTERLAQKAKVYDQKKETQIVVYKRKSERKFIDRWSVERYKLAERNMLKVMKEKNAVFGNSILRPELRSEARKLIGDTGLLDHLLKHMAGKVAPGGQDRFMRKHNADGAMEYWLESSDLIHIRKEAGVKDPYWTPPPGWKLGDNPSQDPVCAGEIRDIREELASLKRELKKLASKKEEEELVIMTTPNSCVTSQNDNLMTPAKEIYADLLKKKYKIEDQLVIIGETLRKMEEDMGWLKKTVDENYPKKPDSTETPLLLEDSPPIQTLEGEVKVVNKGNQITESPQNREKGRKHDQQERSPLSLISNTGFRICRPVGMFAWPQLPALAAATDTNASSPSHRQAYPSPFPVKPLAAKRPLGLTFPFTIIPEEAPKNLFNV</sequence>